<gene>
    <name evidence="1" type="primary">thiG</name>
    <name type="ordered locus">Rpal_4094</name>
</gene>
<dbReference type="EC" id="2.8.1.10" evidence="1"/>
<dbReference type="EMBL" id="CP001096">
    <property type="protein sequence ID" value="ACF02590.1"/>
    <property type="molecule type" value="Genomic_DNA"/>
</dbReference>
<dbReference type="RefSeq" id="WP_012497002.1">
    <property type="nucleotide sequence ID" value="NC_011004.1"/>
</dbReference>
<dbReference type="SMR" id="B3QFS7"/>
<dbReference type="KEGG" id="rpt:Rpal_4094"/>
<dbReference type="HOGENOM" id="CLU_062233_1_0_5"/>
<dbReference type="OrthoDB" id="9805935at2"/>
<dbReference type="UniPathway" id="UPA00060"/>
<dbReference type="Proteomes" id="UP000001725">
    <property type="component" value="Chromosome"/>
</dbReference>
<dbReference type="GO" id="GO:0005737">
    <property type="term" value="C:cytoplasm"/>
    <property type="evidence" value="ECO:0007669"/>
    <property type="project" value="UniProtKB-SubCell"/>
</dbReference>
<dbReference type="GO" id="GO:1990107">
    <property type="term" value="F:thiazole synthase activity"/>
    <property type="evidence" value="ECO:0007669"/>
    <property type="project" value="UniProtKB-EC"/>
</dbReference>
<dbReference type="GO" id="GO:0009229">
    <property type="term" value="P:thiamine diphosphate biosynthetic process"/>
    <property type="evidence" value="ECO:0007669"/>
    <property type="project" value="UniProtKB-UniRule"/>
</dbReference>
<dbReference type="CDD" id="cd04728">
    <property type="entry name" value="ThiG"/>
    <property type="match status" value="1"/>
</dbReference>
<dbReference type="Gene3D" id="3.20.20.70">
    <property type="entry name" value="Aldolase class I"/>
    <property type="match status" value="1"/>
</dbReference>
<dbReference type="HAMAP" id="MF_00443">
    <property type="entry name" value="ThiG"/>
    <property type="match status" value="1"/>
</dbReference>
<dbReference type="InterPro" id="IPR013785">
    <property type="entry name" value="Aldolase_TIM"/>
</dbReference>
<dbReference type="InterPro" id="IPR033983">
    <property type="entry name" value="Thiazole_synthase_ThiG"/>
</dbReference>
<dbReference type="InterPro" id="IPR008867">
    <property type="entry name" value="ThiG"/>
</dbReference>
<dbReference type="PANTHER" id="PTHR34266">
    <property type="entry name" value="THIAZOLE SYNTHASE"/>
    <property type="match status" value="1"/>
</dbReference>
<dbReference type="PANTHER" id="PTHR34266:SF2">
    <property type="entry name" value="THIAZOLE SYNTHASE"/>
    <property type="match status" value="1"/>
</dbReference>
<dbReference type="Pfam" id="PF05690">
    <property type="entry name" value="ThiG"/>
    <property type="match status" value="1"/>
</dbReference>
<dbReference type="SUPFAM" id="SSF110399">
    <property type="entry name" value="ThiG-like"/>
    <property type="match status" value="1"/>
</dbReference>
<name>THIG_RHOPT</name>
<reference key="1">
    <citation type="submission" date="2008-05" db="EMBL/GenBank/DDBJ databases">
        <title>Complete sequence of Rhodopseudomonas palustris TIE-1.</title>
        <authorList>
            <consortium name="US DOE Joint Genome Institute"/>
            <person name="Lucas S."/>
            <person name="Copeland A."/>
            <person name="Lapidus A."/>
            <person name="Glavina del Rio T."/>
            <person name="Dalin E."/>
            <person name="Tice H."/>
            <person name="Pitluck S."/>
            <person name="Chain P."/>
            <person name="Malfatti S."/>
            <person name="Shin M."/>
            <person name="Vergez L."/>
            <person name="Lang D."/>
            <person name="Schmutz J."/>
            <person name="Larimer F."/>
            <person name="Land M."/>
            <person name="Hauser L."/>
            <person name="Kyrpides N."/>
            <person name="Mikhailova N."/>
            <person name="Emerson D."/>
            <person name="Newman D.K."/>
            <person name="Roden E."/>
            <person name="Richardson P."/>
        </authorList>
    </citation>
    <scope>NUCLEOTIDE SEQUENCE [LARGE SCALE GENOMIC DNA]</scope>
    <source>
        <strain>TIE-1</strain>
    </source>
</reference>
<comment type="function">
    <text evidence="1">Catalyzes the rearrangement of 1-deoxy-D-xylulose 5-phosphate (DXP) to produce the thiazole phosphate moiety of thiamine. Sulfur is provided by the thiocarboxylate moiety of the carrier protein ThiS. In vitro, sulfur can be provided by H(2)S.</text>
</comment>
<comment type="catalytic activity">
    <reaction evidence="1">
        <text>[ThiS sulfur-carrier protein]-C-terminal-Gly-aminoethanethioate + 2-iminoacetate + 1-deoxy-D-xylulose 5-phosphate = [ThiS sulfur-carrier protein]-C-terminal Gly-Gly + 2-[(2R,5Z)-2-carboxy-4-methylthiazol-5(2H)-ylidene]ethyl phosphate + 2 H2O + H(+)</text>
        <dbReference type="Rhea" id="RHEA:26297"/>
        <dbReference type="Rhea" id="RHEA-COMP:12909"/>
        <dbReference type="Rhea" id="RHEA-COMP:19908"/>
        <dbReference type="ChEBI" id="CHEBI:15377"/>
        <dbReference type="ChEBI" id="CHEBI:15378"/>
        <dbReference type="ChEBI" id="CHEBI:57792"/>
        <dbReference type="ChEBI" id="CHEBI:62899"/>
        <dbReference type="ChEBI" id="CHEBI:77846"/>
        <dbReference type="ChEBI" id="CHEBI:90778"/>
        <dbReference type="ChEBI" id="CHEBI:232372"/>
        <dbReference type="EC" id="2.8.1.10"/>
    </reaction>
</comment>
<comment type="pathway">
    <text evidence="1">Cofactor biosynthesis; thiamine diphosphate biosynthesis.</text>
</comment>
<comment type="subunit">
    <text evidence="1">Homotetramer. Forms heterodimers with either ThiH or ThiS.</text>
</comment>
<comment type="subcellular location">
    <subcellularLocation>
        <location evidence="1">Cytoplasm</location>
    </subcellularLocation>
</comment>
<comment type="similarity">
    <text evidence="1">Belongs to the ThiG family.</text>
</comment>
<accession>B3QFS7</accession>
<organism>
    <name type="scientific">Rhodopseudomonas palustris (strain TIE-1)</name>
    <dbReference type="NCBI Taxonomy" id="395960"/>
    <lineage>
        <taxon>Bacteria</taxon>
        <taxon>Pseudomonadati</taxon>
        <taxon>Pseudomonadota</taxon>
        <taxon>Alphaproteobacteria</taxon>
        <taxon>Hyphomicrobiales</taxon>
        <taxon>Nitrobacteraceae</taxon>
        <taxon>Rhodopseudomonas</taxon>
    </lineage>
</organism>
<feature type="chain" id="PRO_1000196889" description="Thiazole synthase">
    <location>
        <begin position="1"/>
        <end position="260"/>
    </location>
</feature>
<feature type="active site" description="Schiff-base intermediate with DXP" evidence="1">
    <location>
        <position position="96"/>
    </location>
</feature>
<feature type="binding site" evidence="1">
    <location>
        <position position="157"/>
    </location>
    <ligand>
        <name>1-deoxy-D-xylulose 5-phosphate</name>
        <dbReference type="ChEBI" id="CHEBI:57792"/>
    </ligand>
</feature>
<feature type="binding site" evidence="1">
    <location>
        <begin position="184"/>
        <end position="185"/>
    </location>
    <ligand>
        <name>1-deoxy-D-xylulose 5-phosphate</name>
        <dbReference type="ChEBI" id="CHEBI:57792"/>
    </ligand>
</feature>
<feature type="binding site" evidence="1">
    <location>
        <begin position="206"/>
        <end position="207"/>
    </location>
    <ligand>
        <name>1-deoxy-D-xylulose 5-phosphate</name>
        <dbReference type="ChEBI" id="CHEBI:57792"/>
    </ligand>
</feature>
<evidence type="ECO:0000255" key="1">
    <source>
        <dbReference type="HAMAP-Rule" id="MF_00443"/>
    </source>
</evidence>
<keyword id="KW-0963">Cytoplasm</keyword>
<keyword id="KW-0704">Schiff base</keyword>
<keyword id="KW-0784">Thiamine biosynthesis</keyword>
<keyword id="KW-0808">Transferase</keyword>
<proteinExistence type="inferred from homology"/>
<protein>
    <recommendedName>
        <fullName evidence="1">Thiazole synthase</fullName>
        <ecNumber evidence="1">2.8.1.10</ecNumber>
    </recommendedName>
</protein>
<sequence>MVKFYDREFGSRLLIGSALYPSPAIMQDSIRESGAEIVTVSLRRETAGGKAGDQFWSLIRELGVTVLPNTAGCRGVRDAVTTAKLARELFATSWIKLEVIADNDTLQPDVVGLVEAAQILIKDGFEVFPYCTEDLSVALRLVDAGCRVIMPWAAPIGSARGITNRDALKLLRDRLPDITLVVDAGLGAPSHAAEAMELGYDAVLLNTAIAKAEDPVAMARGFKLAIEAGRTGFEAGLMGARDFASPSTPVIGTPFWHAVS</sequence>